<organism>
    <name type="scientific">Vibrio cholerae serotype O1 (strain ATCC 39541 / Classical Ogawa 395 / O395)</name>
    <dbReference type="NCBI Taxonomy" id="345073"/>
    <lineage>
        <taxon>Bacteria</taxon>
        <taxon>Pseudomonadati</taxon>
        <taxon>Pseudomonadota</taxon>
        <taxon>Gammaproteobacteria</taxon>
        <taxon>Vibrionales</taxon>
        <taxon>Vibrionaceae</taxon>
        <taxon>Vibrio</taxon>
    </lineage>
</organism>
<dbReference type="EMBL" id="CP000627">
    <property type="protein sequence ID" value="ABQ19649.1"/>
    <property type="molecule type" value="Genomic_DNA"/>
</dbReference>
<dbReference type="EMBL" id="CP001235">
    <property type="protein sequence ID" value="ACP10683.1"/>
    <property type="molecule type" value="Genomic_DNA"/>
</dbReference>
<dbReference type="RefSeq" id="WP_001096208.1">
    <property type="nucleotide sequence ID" value="NZ_JAACZH010000007.1"/>
</dbReference>
<dbReference type="SMR" id="A5F554"/>
<dbReference type="GeneID" id="94012764"/>
<dbReference type="KEGG" id="vco:VC0395_A2162"/>
<dbReference type="KEGG" id="vcr:VC395_2697"/>
<dbReference type="PATRIC" id="fig|345073.21.peg.2597"/>
<dbReference type="eggNOG" id="COG0094">
    <property type="taxonomic scope" value="Bacteria"/>
</dbReference>
<dbReference type="HOGENOM" id="CLU_061015_2_1_6"/>
<dbReference type="OrthoDB" id="9806626at2"/>
<dbReference type="Proteomes" id="UP000000249">
    <property type="component" value="Chromosome 2"/>
</dbReference>
<dbReference type="GO" id="GO:1990904">
    <property type="term" value="C:ribonucleoprotein complex"/>
    <property type="evidence" value="ECO:0007669"/>
    <property type="project" value="UniProtKB-KW"/>
</dbReference>
<dbReference type="GO" id="GO:0005840">
    <property type="term" value="C:ribosome"/>
    <property type="evidence" value="ECO:0007669"/>
    <property type="project" value="UniProtKB-KW"/>
</dbReference>
<dbReference type="GO" id="GO:0019843">
    <property type="term" value="F:rRNA binding"/>
    <property type="evidence" value="ECO:0007669"/>
    <property type="project" value="UniProtKB-UniRule"/>
</dbReference>
<dbReference type="GO" id="GO:0003735">
    <property type="term" value="F:structural constituent of ribosome"/>
    <property type="evidence" value="ECO:0007669"/>
    <property type="project" value="InterPro"/>
</dbReference>
<dbReference type="GO" id="GO:0000049">
    <property type="term" value="F:tRNA binding"/>
    <property type="evidence" value="ECO:0007669"/>
    <property type="project" value="UniProtKB-UniRule"/>
</dbReference>
<dbReference type="GO" id="GO:0006412">
    <property type="term" value="P:translation"/>
    <property type="evidence" value="ECO:0007669"/>
    <property type="project" value="UniProtKB-UniRule"/>
</dbReference>
<dbReference type="FunFam" id="3.30.1440.10:FF:000001">
    <property type="entry name" value="50S ribosomal protein L5"/>
    <property type="match status" value="1"/>
</dbReference>
<dbReference type="Gene3D" id="3.30.1440.10">
    <property type="match status" value="1"/>
</dbReference>
<dbReference type="HAMAP" id="MF_01333_B">
    <property type="entry name" value="Ribosomal_uL5_B"/>
    <property type="match status" value="1"/>
</dbReference>
<dbReference type="InterPro" id="IPR002132">
    <property type="entry name" value="Ribosomal_uL5"/>
</dbReference>
<dbReference type="InterPro" id="IPR020930">
    <property type="entry name" value="Ribosomal_uL5_bac-type"/>
</dbReference>
<dbReference type="InterPro" id="IPR031309">
    <property type="entry name" value="Ribosomal_uL5_C"/>
</dbReference>
<dbReference type="InterPro" id="IPR020929">
    <property type="entry name" value="Ribosomal_uL5_CS"/>
</dbReference>
<dbReference type="InterPro" id="IPR022803">
    <property type="entry name" value="Ribosomal_uL5_dom_sf"/>
</dbReference>
<dbReference type="InterPro" id="IPR031310">
    <property type="entry name" value="Ribosomal_uL5_N"/>
</dbReference>
<dbReference type="NCBIfam" id="NF000585">
    <property type="entry name" value="PRK00010.1"/>
    <property type="match status" value="1"/>
</dbReference>
<dbReference type="PANTHER" id="PTHR11994">
    <property type="entry name" value="60S RIBOSOMAL PROTEIN L11-RELATED"/>
    <property type="match status" value="1"/>
</dbReference>
<dbReference type="Pfam" id="PF00281">
    <property type="entry name" value="Ribosomal_L5"/>
    <property type="match status" value="1"/>
</dbReference>
<dbReference type="Pfam" id="PF00673">
    <property type="entry name" value="Ribosomal_L5_C"/>
    <property type="match status" value="1"/>
</dbReference>
<dbReference type="PIRSF" id="PIRSF002161">
    <property type="entry name" value="Ribosomal_L5"/>
    <property type="match status" value="1"/>
</dbReference>
<dbReference type="SUPFAM" id="SSF55282">
    <property type="entry name" value="RL5-like"/>
    <property type="match status" value="1"/>
</dbReference>
<dbReference type="PROSITE" id="PS00358">
    <property type="entry name" value="RIBOSOMAL_L5"/>
    <property type="match status" value="1"/>
</dbReference>
<keyword id="KW-0687">Ribonucleoprotein</keyword>
<keyword id="KW-0689">Ribosomal protein</keyword>
<keyword id="KW-0694">RNA-binding</keyword>
<keyword id="KW-0699">rRNA-binding</keyword>
<keyword id="KW-0820">tRNA-binding</keyword>
<comment type="function">
    <text evidence="1">This is one of the proteins that bind and probably mediate the attachment of the 5S RNA into the large ribosomal subunit, where it forms part of the central protuberance. In the 70S ribosome it contacts protein S13 of the 30S subunit (bridge B1b), connecting the 2 subunits; this bridge is implicated in subunit movement. Contacts the P site tRNA; the 5S rRNA and some of its associated proteins might help stabilize positioning of ribosome-bound tRNAs.</text>
</comment>
<comment type="subunit">
    <text evidence="1">Part of the 50S ribosomal subunit; part of the 5S rRNA/L5/L18/L25 subcomplex. Contacts the 5S rRNA and the P site tRNA. Forms a bridge to the 30S subunit in the 70S ribosome.</text>
</comment>
<comment type="similarity">
    <text evidence="1">Belongs to the universal ribosomal protein uL5 family.</text>
</comment>
<proteinExistence type="inferred from homology"/>
<name>RL5_VIBC3</name>
<sequence>MAKLHDYYKSSVVAELTKQFSYTSVMQVPRIEKITLNMGVGEAINDKKLLENAASDMAIISGQKPLITKARKSVAGFKIREGYPIGCKVTLRGERMWDFLERLISIALPRVRDFRGVNGKSFDGRGNYSMGVREQIIFPEIDYDKVDRVRGLDITITTTAGTDEEGRALLAAFNFPFRK</sequence>
<feature type="chain" id="PRO_1000073293" description="Large ribosomal subunit protein uL5">
    <location>
        <begin position="1"/>
        <end position="179"/>
    </location>
</feature>
<protein>
    <recommendedName>
        <fullName evidence="1">Large ribosomal subunit protein uL5</fullName>
    </recommendedName>
    <alternativeName>
        <fullName evidence="2">50S ribosomal protein L5</fullName>
    </alternativeName>
</protein>
<accession>A5F554</accession>
<accession>C3LXI3</accession>
<gene>
    <name evidence="1" type="primary">rplE</name>
    <name type="ordered locus">VC0395_A2162</name>
    <name type="ordered locus">VC395_2697</name>
</gene>
<reference key="1">
    <citation type="submission" date="2007-03" db="EMBL/GenBank/DDBJ databases">
        <authorList>
            <person name="Heidelberg J."/>
        </authorList>
    </citation>
    <scope>NUCLEOTIDE SEQUENCE [LARGE SCALE GENOMIC DNA]</scope>
    <source>
        <strain>ATCC 39541 / Classical Ogawa 395 / O395</strain>
    </source>
</reference>
<reference key="2">
    <citation type="journal article" date="2008" name="PLoS ONE">
        <title>A recalibrated molecular clock and independent origins for the cholera pandemic clones.</title>
        <authorList>
            <person name="Feng L."/>
            <person name="Reeves P.R."/>
            <person name="Lan R."/>
            <person name="Ren Y."/>
            <person name="Gao C."/>
            <person name="Zhou Z."/>
            <person name="Ren Y."/>
            <person name="Cheng J."/>
            <person name="Wang W."/>
            <person name="Wang J."/>
            <person name="Qian W."/>
            <person name="Li D."/>
            <person name="Wang L."/>
        </authorList>
    </citation>
    <scope>NUCLEOTIDE SEQUENCE [LARGE SCALE GENOMIC DNA]</scope>
    <source>
        <strain>ATCC 39541 / Classical Ogawa 395 / O395</strain>
    </source>
</reference>
<evidence type="ECO:0000255" key="1">
    <source>
        <dbReference type="HAMAP-Rule" id="MF_01333"/>
    </source>
</evidence>
<evidence type="ECO:0000305" key="2"/>